<name>NRAT1_ORYSJ</name>
<organism>
    <name type="scientific">Oryza sativa subsp. japonica</name>
    <name type="common">Rice</name>
    <dbReference type="NCBI Taxonomy" id="39947"/>
    <lineage>
        <taxon>Eukaryota</taxon>
        <taxon>Viridiplantae</taxon>
        <taxon>Streptophyta</taxon>
        <taxon>Embryophyta</taxon>
        <taxon>Tracheophyta</taxon>
        <taxon>Spermatophyta</taxon>
        <taxon>Magnoliopsida</taxon>
        <taxon>Liliopsida</taxon>
        <taxon>Poales</taxon>
        <taxon>Poaceae</taxon>
        <taxon>BOP clade</taxon>
        <taxon>Oryzoideae</taxon>
        <taxon>Oryzeae</taxon>
        <taxon>Oryzinae</taxon>
        <taxon>Oryza</taxon>
        <taxon>Oryza sativa</taxon>
    </lineage>
</organism>
<evidence type="ECO:0000255" key="1"/>
<evidence type="ECO:0000256" key="2">
    <source>
        <dbReference type="SAM" id="MobiDB-lite"/>
    </source>
</evidence>
<evidence type="ECO:0000269" key="3">
    <source>
    </source>
</evidence>
<evidence type="ECO:0000305" key="4"/>
<feature type="chain" id="PRO_0000405571" description="Metal transporter NRAT1">
    <location>
        <begin position="1"/>
        <end position="545"/>
    </location>
</feature>
<feature type="transmembrane region" description="Helical" evidence="1">
    <location>
        <begin position="51"/>
        <end position="71"/>
    </location>
</feature>
<feature type="transmembrane region" description="Helical" evidence="1">
    <location>
        <begin position="84"/>
        <end position="104"/>
    </location>
</feature>
<feature type="transmembrane region" description="Helical" evidence="1">
    <location>
        <begin position="128"/>
        <end position="148"/>
    </location>
</feature>
<feature type="transmembrane region" description="Helical" evidence="1">
    <location>
        <begin position="155"/>
        <end position="175"/>
    </location>
</feature>
<feature type="transmembrane region" description="Helical" evidence="1">
    <location>
        <begin position="188"/>
        <end position="208"/>
    </location>
</feature>
<feature type="transmembrane region" description="Helical" evidence="1">
    <location>
        <begin position="234"/>
        <end position="254"/>
    </location>
</feature>
<feature type="transmembrane region" description="Helical" evidence="1">
    <location>
        <begin position="278"/>
        <end position="298"/>
    </location>
</feature>
<feature type="transmembrane region" description="Helical" evidence="1">
    <location>
        <begin position="333"/>
        <end position="353"/>
    </location>
</feature>
<feature type="transmembrane region" description="Helical" evidence="1">
    <location>
        <begin position="373"/>
        <end position="395"/>
    </location>
</feature>
<feature type="transmembrane region" description="Helical" evidence="1">
    <location>
        <begin position="398"/>
        <end position="418"/>
    </location>
</feature>
<feature type="transmembrane region" description="Helical" evidence="1">
    <location>
        <begin position="437"/>
        <end position="457"/>
    </location>
</feature>
<feature type="transmembrane region" description="Helical" evidence="1">
    <location>
        <begin position="474"/>
        <end position="494"/>
    </location>
</feature>
<feature type="region of interest" description="Disordered" evidence="2">
    <location>
        <begin position="516"/>
        <end position="545"/>
    </location>
</feature>
<feature type="compositionally biased region" description="Basic and acidic residues" evidence="2">
    <location>
        <begin position="536"/>
        <end position="545"/>
    </location>
</feature>
<dbReference type="EMBL" id="AB525887">
    <property type="protein sequence ID" value="BAJ22943.1"/>
    <property type="molecule type" value="mRNA"/>
</dbReference>
<dbReference type="EMBL" id="AP004150">
    <property type="protein sequence ID" value="BAD07752.1"/>
    <property type="molecule type" value="Genomic_DNA"/>
</dbReference>
<dbReference type="EMBL" id="AP008208">
    <property type="protein sequence ID" value="BAF07708.1"/>
    <property type="molecule type" value="Genomic_DNA"/>
</dbReference>
<dbReference type="EMBL" id="AP014958">
    <property type="protein sequence ID" value="BAS76823.1"/>
    <property type="molecule type" value="Genomic_DNA"/>
</dbReference>
<dbReference type="EMBL" id="CM000139">
    <property type="protein sequence ID" value="EEE56244.1"/>
    <property type="molecule type" value="Genomic_DNA"/>
</dbReference>
<dbReference type="RefSeq" id="XP_015625418.1">
    <property type="nucleotide sequence ID" value="XM_015769932.1"/>
</dbReference>
<dbReference type="SMR" id="Q6ZG85"/>
<dbReference type="FunCoup" id="Q6ZG85">
    <property type="interactions" value="5"/>
</dbReference>
<dbReference type="STRING" id="39947.Q6ZG85"/>
<dbReference type="TCDB" id="2.A.55.2.5">
    <property type="family name" value="the metal ion (mn(2+)-iron) transporter (nramp) family"/>
</dbReference>
<dbReference type="PaxDb" id="39947-Q6ZG85"/>
<dbReference type="EnsemblPlants" id="Os02t0131800-01">
    <property type="protein sequence ID" value="Os02t0131800-01"/>
    <property type="gene ID" value="Os02g0131800"/>
</dbReference>
<dbReference type="Gramene" id="Os02t0131800-01">
    <property type="protein sequence ID" value="Os02t0131800-01"/>
    <property type="gene ID" value="Os02g0131800"/>
</dbReference>
<dbReference type="KEGG" id="dosa:Os02g0131800"/>
<dbReference type="eggNOG" id="KOG1291">
    <property type="taxonomic scope" value="Eukaryota"/>
</dbReference>
<dbReference type="HOGENOM" id="CLU_020088_0_1_1"/>
<dbReference type="InParanoid" id="Q6ZG85"/>
<dbReference type="OMA" id="YVNICLW"/>
<dbReference type="OrthoDB" id="409173at2759"/>
<dbReference type="PlantReactome" id="R-OSA-9639136">
    <property type="pathway name" value="Response to Aluminum stress"/>
</dbReference>
<dbReference type="Proteomes" id="UP000000763">
    <property type="component" value="Chromosome 2"/>
</dbReference>
<dbReference type="Proteomes" id="UP000007752">
    <property type="component" value="Chromosome 2"/>
</dbReference>
<dbReference type="Proteomes" id="UP000059680">
    <property type="component" value="Chromosome 2"/>
</dbReference>
<dbReference type="GO" id="GO:0005886">
    <property type="term" value="C:plasma membrane"/>
    <property type="evidence" value="ECO:0000314"/>
    <property type="project" value="UniProtKB"/>
</dbReference>
<dbReference type="GO" id="GO:0015083">
    <property type="term" value="F:aluminum ion transmembrane transporter activity"/>
    <property type="evidence" value="ECO:0000314"/>
    <property type="project" value="UniProtKB"/>
</dbReference>
<dbReference type="GO" id="GO:0046873">
    <property type="term" value="F:metal ion transmembrane transporter activity"/>
    <property type="evidence" value="ECO:0007669"/>
    <property type="project" value="InterPro"/>
</dbReference>
<dbReference type="GO" id="GO:0015690">
    <property type="term" value="P:aluminum cation transport"/>
    <property type="evidence" value="ECO:0000315"/>
    <property type="project" value="UniProtKB"/>
</dbReference>
<dbReference type="GO" id="GO:0034755">
    <property type="term" value="P:iron ion transmembrane transport"/>
    <property type="evidence" value="ECO:0000318"/>
    <property type="project" value="GO_Central"/>
</dbReference>
<dbReference type="GO" id="GO:0006828">
    <property type="term" value="P:manganese ion transport"/>
    <property type="evidence" value="ECO:0000318"/>
    <property type="project" value="GO_Central"/>
</dbReference>
<dbReference type="GO" id="GO:0010044">
    <property type="term" value="P:response to aluminum ion"/>
    <property type="evidence" value="ECO:0000315"/>
    <property type="project" value="UniProtKB"/>
</dbReference>
<dbReference type="HAMAP" id="MF_00221">
    <property type="entry name" value="NRAMP"/>
    <property type="match status" value="1"/>
</dbReference>
<dbReference type="InterPro" id="IPR001046">
    <property type="entry name" value="NRAMP_fam"/>
</dbReference>
<dbReference type="NCBIfam" id="TIGR01197">
    <property type="entry name" value="nramp"/>
    <property type="match status" value="1"/>
</dbReference>
<dbReference type="NCBIfam" id="NF037982">
    <property type="entry name" value="Nramp_1"/>
    <property type="match status" value="1"/>
</dbReference>
<dbReference type="PANTHER" id="PTHR11706:SF48">
    <property type="entry name" value="METAL TRANSPORTER NRAT1"/>
    <property type="match status" value="1"/>
</dbReference>
<dbReference type="PANTHER" id="PTHR11706">
    <property type="entry name" value="SOLUTE CARRIER PROTEIN FAMILY 11 MEMBER"/>
    <property type="match status" value="1"/>
</dbReference>
<dbReference type="Pfam" id="PF01566">
    <property type="entry name" value="Nramp"/>
    <property type="match status" value="1"/>
</dbReference>
<dbReference type="PRINTS" id="PR00447">
    <property type="entry name" value="NATRESASSCMP"/>
</dbReference>
<protein>
    <recommendedName>
        <fullName>Metal transporter NRAT1</fullName>
    </recommendedName>
    <alternativeName>
        <fullName>Protein NRAMP ALUMINUM TRANSPORTER 1</fullName>
    </alternativeName>
</protein>
<sequence length="545" mass="59245">MEGTGEMREVGRETLHGGVVQSVSETDEYKEKTIDSEKDGQFRVQPRWRKFLAHVGPGALVAIGFLDPSNLETDMQAGADFKYELLWVILVGMVFALLIQTLAANLGVKTGRHLAELCREEYPHYVNIFLWIIAELAVISDDIPEVLGTAFAFNILLKIPVWAGVILTVFSTLLLLGVQRFGARKLEFIIAAFMFTMAACFFGELSYLRPSAGEVVKGMFVPSLQGKGAAANAIALFGAIITPYNLFLHSALVLSRKTPRSDKSIRAACRYFLIECSLAFIVAFLINVSVVVVAGSICNANNLSPADANTCGDLTLQSTPLLLRNVLGRSSSVVYAVALLASGQSTTISCTFAGQVIMQGFLDMKMKNWVRNLITRVIAIAPSLIVSIVSGPSGAGKLIILSSMILSFELPFALIPLLKFCNSSKKVGPLKESIYTVVIAWILSFALIVVNTYFLVWTYVDWLVHNNLPKYANGLISVVVFALMAAYLVAVVYLTFRKDTVATYVPVPERAQAQVEAGGTPVVDASAADEDQPAPYRKDLADASM</sequence>
<reference key="1">
    <citation type="journal article" date="2010" name="Proc. Natl. Acad. Sci. U.S.A.">
        <title>Plasma membrane-localized transporter for aluminum in rice.</title>
        <authorList>
            <person name="Xia J."/>
            <person name="Yamaji N."/>
            <person name="Kasai T."/>
            <person name="Ma J.F."/>
        </authorList>
    </citation>
    <scope>NUCLEOTIDE SEQUENCE [MRNA]</scope>
    <scope>FUNCTION</scope>
    <scope>SUBCELLULAR LOCATION</scope>
    <scope>TISSUE SPECIFICITY</scope>
    <scope>INDUCTION BY ALUMINUM</scope>
    <scope>DISRUPTION PHENOTYPE</scope>
    <source>
        <strain>cv. Nipponbare</strain>
    </source>
</reference>
<reference key="2">
    <citation type="journal article" date="2005" name="Nature">
        <title>The map-based sequence of the rice genome.</title>
        <authorList>
            <consortium name="International rice genome sequencing project (IRGSP)"/>
        </authorList>
    </citation>
    <scope>NUCLEOTIDE SEQUENCE [LARGE SCALE GENOMIC DNA]</scope>
    <source>
        <strain>cv. Nipponbare</strain>
    </source>
</reference>
<reference key="3">
    <citation type="journal article" date="2008" name="Nucleic Acids Res.">
        <title>The rice annotation project database (RAP-DB): 2008 update.</title>
        <authorList>
            <consortium name="The rice annotation project (RAP)"/>
        </authorList>
    </citation>
    <scope>GENOME REANNOTATION</scope>
    <source>
        <strain>cv. Nipponbare</strain>
    </source>
</reference>
<reference key="4">
    <citation type="journal article" date="2013" name="Rice">
        <title>Improvement of the Oryza sativa Nipponbare reference genome using next generation sequence and optical map data.</title>
        <authorList>
            <person name="Kawahara Y."/>
            <person name="de la Bastide M."/>
            <person name="Hamilton J.P."/>
            <person name="Kanamori H."/>
            <person name="McCombie W.R."/>
            <person name="Ouyang S."/>
            <person name="Schwartz D.C."/>
            <person name="Tanaka T."/>
            <person name="Wu J."/>
            <person name="Zhou S."/>
            <person name="Childs K.L."/>
            <person name="Davidson R.M."/>
            <person name="Lin H."/>
            <person name="Quesada-Ocampo L."/>
            <person name="Vaillancourt B."/>
            <person name="Sakai H."/>
            <person name="Lee S.S."/>
            <person name="Kim J."/>
            <person name="Numa H."/>
            <person name="Itoh T."/>
            <person name="Buell C.R."/>
            <person name="Matsumoto T."/>
        </authorList>
    </citation>
    <scope>GENOME REANNOTATION</scope>
    <source>
        <strain>cv. Nipponbare</strain>
    </source>
</reference>
<reference key="5">
    <citation type="journal article" date="2005" name="PLoS Biol.">
        <title>The genomes of Oryza sativa: a history of duplications.</title>
        <authorList>
            <person name="Yu J."/>
            <person name="Wang J."/>
            <person name="Lin W."/>
            <person name="Li S."/>
            <person name="Li H."/>
            <person name="Zhou J."/>
            <person name="Ni P."/>
            <person name="Dong W."/>
            <person name="Hu S."/>
            <person name="Zeng C."/>
            <person name="Zhang J."/>
            <person name="Zhang Y."/>
            <person name="Li R."/>
            <person name="Xu Z."/>
            <person name="Li S."/>
            <person name="Li X."/>
            <person name="Zheng H."/>
            <person name="Cong L."/>
            <person name="Lin L."/>
            <person name="Yin J."/>
            <person name="Geng J."/>
            <person name="Li G."/>
            <person name="Shi J."/>
            <person name="Liu J."/>
            <person name="Lv H."/>
            <person name="Li J."/>
            <person name="Wang J."/>
            <person name="Deng Y."/>
            <person name="Ran L."/>
            <person name="Shi X."/>
            <person name="Wang X."/>
            <person name="Wu Q."/>
            <person name="Li C."/>
            <person name="Ren X."/>
            <person name="Wang J."/>
            <person name="Wang X."/>
            <person name="Li D."/>
            <person name="Liu D."/>
            <person name="Zhang X."/>
            <person name="Ji Z."/>
            <person name="Zhao W."/>
            <person name="Sun Y."/>
            <person name="Zhang Z."/>
            <person name="Bao J."/>
            <person name="Han Y."/>
            <person name="Dong L."/>
            <person name="Ji J."/>
            <person name="Chen P."/>
            <person name="Wu S."/>
            <person name="Liu J."/>
            <person name="Xiao Y."/>
            <person name="Bu D."/>
            <person name="Tan J."/>
            <person name="Yang L."/>
            <person name="Ye C."/>
            <person name="Zhang J."/>
            <person name="Xu J."/>
            <person name="Zhou Y."/>
            <person name="Yu Y."/>
            <person name="Zhang B."/>
            <person name="Zhuang S."/>
            <person name="Wei H."/>
            <person name="Liu B."/>
            <person name="Lei M."/>
            <person name="Yu H."/>
            <person name="Li Y."/>
            <person name="Xu H."/>
            <person name="Wei S."/>
            <person name="He X."/>
            <person name="Fang L."/>
            <person name="Zhang Z."/>
            <person name="Zhang Y."/>
            <person name="Huang X."/>
            <person name="Su Z."/>
            <person name="Tong W."/>
            <person name="Li J."/>
            <person name="Tong Z."/>
            <person name="Li S."/>
            <person name="Ye J."/>
            <person name="Wang L."/>
            <person name="Fang L."/>
            <person name="Lei T."/>
            <person name="Chen C.-S."/>
            <person name="Chen H.-C."/>
            <person name="Xu Z."/>
            <person name="Li H."/>
            <person name="Huang H."/>
            <person name="Zhang F."/>
            <person name="Xu H."/>
            <person name="Li N."/>
            <person name="Zhao C."/>
            <person name="Li S."/>
            <person name="Dong L."/>
            <person name="Huang Y."/>
            <person name="Li L."/>
            <person name="Xi Y."/>
            <person name="Qi Q."/>
            <person name="Li W."/>
            <person name="Zhang B."/>
            <person name="Hu W."/>
            <person name="Zhang Y."/>
            <person name="Tian X."/>
            <person name="Jiao Y."/>
            <person name="Liang X."/>
            <person name="Jin J."/>
            <person name="Gao L."/>
            <person name="Zheng W."/>
            <person name="Hao B."/>
            <person name="Liu S.-M."/>
            <person name="Wang W."/>
            <person name="Yuan L."/>
            <person name="Cao M."/>
            <person name="McDermott J."/>
            <person name="Samudrala R."/>
            <person name="Wang J."/>
            <person name="Wong G.K.-S."/>
            <person name="Yang H."/>
        </authorList>
    </citation>
    <scope>NUCLEOTIDE SEQUENCE [LARGE SCALE GENOMIC DNA]</scope>
    <source>
        <strain>cv. Nipponbare</strain>
    </source>
</reference>
<gene>
    <name type="primary">NRAT1</name>
    <name type="ordered locus">Os02g0131800</name>
    <name type="ordered locus">LOC_Os02g03900</name>
    <name type="ORF">OJ1007_D04.24</name>
    <name type="ORF">OsJ_05257</name>
</gene>
<accession>Q6ZG85</accession>
<accession>A0A0P0VEB7</accession>
<comment type="function">
    <text evidence="3">Metal transporter that transports the trivalent cation aluminum (Al(3+)), but does not seem to transport divalent cations such as iron (Fe(2+)), manganese (Mg(2+)) or Cadmium (Cd(2+)). Involved in Al tolerance by taking up Al in root cells, where it is detoxified by chelation with organic acid anions and sequestration into the vacuoles.</text>
</comment>
<comment type="subcellular location">
    <subcellularLocation>
        <location evidence="3">Cell membrane</location>
        <topology evidence="3">Multi-pass membrane protein</topology>
    </subcellularLocation>
</comment>
<comment type="tissue specificity">
    <text evidence="3">Expressed at low levels in roots.</text>
</comment>
<comment type="induction">
    <text evidence="3">By Al in roots. Positively regulated by ART1.</text>
</comment>
<comment type="disruption phenotype">
    <text evidence="3">No visible phenotype under normal growth condition, but after exposure to Al, decreased levels of Al in root-cell sap, increased Al content in the cell wall and increased inhibition of root growth.</text>
</comment>
<comment type="similarity">
    <text evidence="4">Belongs to the NRAMP (TC 2.A.55) family.</text>
</comment>
<proteinExistence type="evidence at transcript level"/>
<keyword id="KW-1003">Cell membrane</keyword>
<keyword id="KW-0406">Ion transport</keyword>
<keyword id="KW-0472">Membrane</keyword>
<keyword id="KW-1185">Reference proteome</keyword>
<keyword id="KW-0812">Transmembrane</keyword>
<keyword id="KW-1133">Transmembrane helix</keyword>
<keyword id="KW-0813">Transport</keyword>